<proteinExistence type="inferred from homology"/>
<gene>
    <name evidence="1" type="primary">murQ</name>
    <name type="ordered locus">MSC_0248</name>
</gene>
<protein>
    <recommendedName>
        <fullName evidence="1">N-acetylmuramic acid 6-phosphate etherase</fullName>
        <shortName evidence="1">MurNAc-6-P etherase</shortName>
        <ecNumber evidence="1">4.2.1.126</ecNumber>
    </recommendedName>
    <alternativeName>
        <fullName evidence="1">N-acetylmuramic acid 6-phosphate hydrolase</fullName>
    </alternativeName>
    <alternativeName>
        <fullName evidence="1">N-acetylmuramic acid 6-phosphate lyase</fullName>
    </alternativeName>
</protein>
<accession>Q6MTZ7</accession>
<name>MURQ_MYCMS</name>
<evidence type="ECO:0000255" key="1">
    <source>
        <dbReference type="HAMAP-Rule" id="MF_00068"/>
    </source>
</evidence>
<feature type="chain" id="PRO_0000249636" description="N-acetylmuramic acid 6-phosphate etherase">
    <location>
        <begin position="1"/>
        <end position="302"/>
    </location>
</feature>
<feature type="domain" description="SIS" evidence="1">
    <location>
        <begin position="58"/>
        <end position="221"/>
    </location>
</feature>
<feature type="active site" description="Proton donor" evidence="1">
    <location>
        <position position="86"/>
    </location>
</feature>
<feature type="active site" evidence="1">
    <location>
        <position position="117"/>
    </location>
</feature>
<keyword id="KW-0119">Carbohydrate metabolism</keyword>
<keyword id="KW-0456">Lyase</keyword>
<keyword id="KW-1185">Reference proteome</keyword>
<organism>
    <name type="scientific">Mycoplasma mycoides subsp. mycoides SC (strain CCUG 32753 / NCTC 10114 / PG1)</name>
    <dbReference type="NCBI Taxonomy" id="272632"/>
    <lineage>
        <taxon>Bacteria</taxon>
        <taxon>Bacillati</taxon>
        <taxon>Mycoplasmatota</taxon>
        <taxon>Mollicutes</taxon>
        <taxon>Mycoplasmataceae</taxon>
        <taxon>Mycoplasma</taxon>
    </lineage>
</organism>
<comment type="function">
    <text evidence="1">Specifically catalyzes the cleavage of the D-lactyl ether substituent of MurNAc 6-phosphate, producing GlcNAc 6-phosphate and D-lactate.</text>
</comment>
<comment type="catalytic activity">
    <reaction evidence="1">
        <text>N-acetyl-D-muramate 6-phosphate + H2O = N-acetyl-D-glucosamine 6-phosphate + (R)-lactate</text>
        <dbReference type="Rhea" id="RHEA:26410"/>
        <dbReference type="ChEBI" id="CHEBI:15377"/>
        <dbReference type="ChEBI" id="CHEBI:16004"/>
        <dbReference type="ChEBI" id="CHEBI:57513"/>
        <dbReference type="ChEBI" id="CHEBI:58722"/>
        <dbReference type="EC" id="4.2.1.126"/>
    </reaction>
</comment>
<comment type="pathway">
    <text evidence="1">Amino-sugar metabolism; N-acetylmuramate degradation.</text>
</comment>
<comment type="subunit">
    <text evidence="1">Homodimer.</text>
</comment>
<comment type="miscellaneous">
    <text evidence="1">A lyase-type mechanism (elimination/hydration) is suggested for the cleavage of the lactyl ether bond of MurNAc 6-phosphate, with the formation of an alpha,beta-unsaturated aldehyde intermediate with (E)-stereochemistry, followed by the syn addition of water to give product.</text>
</comment>
<comment type="similarity">
    <text evidence="1">Belongs to the GCKR-like family. MurNAc-6-P etherase subfamily.</text>
</comment>
<reference key="1">
    <citation type="journal article" date="2004" name="Genome Res.">
        <title>The genome sequence of Mycoplasma mycoides subsp. mycoides SC type strain PG1T, the causative agent of contagious bovine pleuropneumonia (CBPP).</title>
        <authorList>
            <person name="Westberg J."/>
            <person name="Persson A."/>
            <person name="Holmberg A."/>
            <person name="Goesmann A."/>
            <person name="Lundeberg J."/>
            <person name="Johansson K.-E."/>
            <person name="Pettersson B."/>
            <person name="Uhlen M."/>
        </authorList>
    </citation>
    <scope>NUCLEOTIDE SEQUENCE [LARGE SCALE GENOMIC DNA]</scope>
    <source>
        <strain>CCUG 32753 / NCTC 10114 / PG1</strain>
    </source>
</reference>
<dbReference type="EC" id="4.2.1.126" evidence="1"/>
<dbReference type="EMBL" id="BX293980">
    <property type="protein sequence ID" value="CAE76889.1"/>
    <property type="molecule type" value="Genomic_DNA"/>
</dbReference>
<dbReference type="RefSeq" id="NP_975247.1">
    <property type="nucleotide sequence ID" value="NC_005364.2"/>
</dbReference>
<dbReference type="RefSeq" id="WP_011166445.1">
    <property type="nucleotide sequence ID" value="NC_005364.2"/>
</dbReference>
<dbReference type="SMR" id="Q6MTZ7"/>
<dbReference type="STRING" id="272632.MSC_0248"/>
<dbReference type="KEGG" id="mmy:MSC_0248"/>
<dbReference type="PATRIC" id="fig|272632.4.peg.268"/>
<dbReference type="eggNOG" id="COG2103">
    <property type="taxonomic scope" value="Bacteria"/>
</dbReference>
<dbReference type="HOGENOM" id="CLU_049049_1_1_14"/>
<dbReference type="UniPathway" id="UPA00342"/>
<dbReference type="Proteomes" id="UP000001016">
    <property type="component" value="Chromosome"/>
</dbReference>
<dbReference type="GO" id="GO:0097367">
    <property type="term" value="F:carbohydrate derivative binding"/>
    <property type="evidence" value="ECO:0007669"/>
    <property type="project" value="InterPro"/>
</dbReference>
<dbReference type="GO" id="GO:0016835">
    <property type="term" value="F:carbon-oxygen lyase activity"/>
    <property type="evidence" value="ECO:0007669"/>
    <property type="project" value="UniProtKB-UniRule"/>
</dbReference>
<dbReference type="GO" id="GO:0016803">
    <property type="term" value="F:ether hydrolase activity"/>
    <property type="evidence" value="ECO:0007669"/>
    <property type="project" value="TreeGrafter"/>
</dbReference>
<dbReference type="GO" id="GO:0046348">
    <property type="term" value="P:amino sugar catabolic process"/>
    <property type="evidence" value="ECO:0007669"/>
    <property type="project" value="InterPro"/>
</dbReference>
<dbReference type="GO" id="GO:0097173">
    <property type="term" value="P:N-acetylmuramic acid catabolic process"/>
    <property type="evidence" value="ECO:0007669"/>
    <property type="project" value="UniProtKB-UniPathway"/>
</dbReference>
<dbReference type="GO" id="GO:0009254">
    <property type="term" value="P:peptidoglycan turnover"/>
    <property type="evidence" value="ECO:0007669"/>
    <property type="project" value="TreeGrafter"/>
</dbReference>
<dbReference type="CDD" id="cd05007">
    <property type="entry name" value="SIS_Etherase"/>
    <property type="match status" value="1"/>
</dbReference>
<dbReference type="FunFam" id="3.40.50.10490:FF:000014">
    <property type="entry name" value="N-acetylmuramic acid 6-phosphate etherase"/>
    <property type="match status" value="1"/>
</dbReference>
<dbReference type="Gene3D" id="1.10.8.1080">
    <property type="match status" value="1"/>
</dbReference>
<dbReference type="Gene3D" id="3.40.50.10490">
    <property type="entry name" value="Glucose-6-phosphate isomerase like protein, domain 1"/>
    <property type="match status" value="1"/>
</dbReference>
<dbReference type="HAMAP" id="MF_00068">
    <property type="entry name" value="MurQ"/>
    <property type="match status" value="1"/>
</dbReference>
<dbReference type="InterPro" id="IPR005488">
    <property type="entry name" value="Etherase_MurQ"/>
</dbReference>
<dbReference type="InterPro" id="IPR005486">
    <property type="entry name" value="Glucokinase_regulatory_CS"/>
</dbReference>
<dbReference type="InterPro" id="IPR040190">
    <property type="entry name" value="MURQ/GCKR"/>
</dbReference>
<dbReference type="InterPro" id="IPR001347">
    <property type="entry name" value="SIS_dom"/>
</dbReference>
<dbReference type="InterPro" id="IPR046348">
    <property type="entry name" value="SIS_dom_sf"/>
</dbReference>
<dbReference type="NCBIfam" id="TIGR00274">
    <property type="entry name" value="N-acetylmuramic acid 6-phosphate etherase"/>
    <property type="match status" value="1"/>
</dbReference>
<dbReference type="NCBIfam" id="NF003915">
    <property type="entry name" value="PRK05441.1"/>
    <property type="match status" value="1"/>
</dbReference>
<dbReference type="NCBIfam" id="NF009222">
    <property type="entry name" value="PRK12570.1"/>
    <property type="match status" value="1"/>
</dbReference>
<dbReference type="PANTHER" id="PTHR10088">
    <property type="entry name" value="GLUCOKINASE REGULATORY PROTEIN"/>
    <property type="match status" value="1"/>
</dbReference>
<dbReference type="PANTHER" id="PTHR10088:SF4">
    <property type="entry name" value="GLUCOKINASE REGULATORY PROTEIN"/>
    <property type="match status" value="1"/>
</dbReference>
<dbReference type="Pfam" id="PF22645">
    <property type="entry name" value="GKRP_SIS_N"/>
    <property type="match status" value="1"/>
</dbReference>
<dbReference type="SUPFAM" id="SSF53697">
    <property type="entry name" value="SIS domain"/>
    <property type="match status" value="1"/>
</dbReference>
<dbReference type="PROSITE" id="PS01272">
    <property type="entry name" value="GCKR"/>
    <property type="match status" value="1"/>
</dbReference>
<dbReference type="PROSITE" id="PS51464">
    <property type="entry name" value="SIS"/>
    <property type="match status" value="1"/>
</dbReference>
<sequence>MKSNNILDIETENINKNSLDIDKKSTSEIIKIINNEDIKVAYAIKKELNQISNVIDLIFERFKKGGRLIYIGSGTSGRLGILDASEMYPTYGIDQNRIIGIIAGGNKAIKNPIEGAEDNEKLAIVDLNKIKLNSFDTVIGIASSGKTPYVLSALKYANKKDALSIGLCMVKNSEMTKIANQVISIKTGAEIITGSTRMKAGTATKLVCNMITTTLMIKLGKVYKNLMIDLVATNDKLKNRAFKIVKQLTSAKDQIIYKALAESNFSCKHAIVMILRKISYNESVLLLENCDNSLTKLLEEKV</sequence>